<evidence type="ECO:0000255" key="1">
    <source>
        <dbReference type="HAMAP-Rule" id="MF_00211"/>
    </source>
</evidence>
<feature type="chain" id="PRO_1000058621" description="Anthranilate phosphoribosyltransferase">
    <location>
        <begin position="1"/>
        <end position="340"/>
    </location>
</feature>
<feature type="binding site" evidence="1">
    <location>
        <position position="78"/>
    </location>
    <ligand>
        <name>5-phospho-alpha-D-ribose 1-diphosphate</name>
        <dbReference type="ChEBI" id="CHEBI:58017"/>
    </ligand>
</feature>
<feature type="binding site" evidence="1">
    <location>
        <position position="78"/>
    </location>
    <ligand>
        <name>anthranilate</name>
        <dbReference type="ChEBI" id="CHEBI:16567"/>
        <label>1</label>
    </ligand>
</feature>
<feature type="binding site" evidence="1">
    <location>
        <begin position="81"/>
        <end position="82"/>
    </location>
    <ligand>
        <name>5-phospho-alpha-D-ribose 1-diphosphate</name>
        <dbReference type="ChEBI" id="CHEBI:58017"/>
    </ligand>
</feature>
<feature type="binding site" evidence="1">
    <location>
        <position position="86"/>
    </location>
    <ligand>
        <name>5-phospho-alpha-D-ribose 1-diphosphate</name>
        <dbReference type="ChEBI" id="CHEBI:58017"/>
    </ligand>
</feature>
<feature type="binding site" evidence="1">
    <location>
        <begin position="88"/>
        <end position="91"/>
    </location>
    <ligand>
        <name>5-phospho-alpha-D-ribose 1-diphosphate</name>
        <dbReference type="ChEBI" id="CHEBI:58017"/>
    </ligand>
</feature>
<feature type="binding site" evidence="1">
    <location>
        <position position="90"/>
    </location>
    <ligand>
        <name>Mg(2+)</name>
        <dbReference type="ChEBI" id="CHEBI:18420"/>
        <label>1</label>
    </ligand>
</feature>
<feature type="binding site" evidence="1">
    <location>
        <begin position="106"/>
        <end position="114"/>
    </location>
    <ligand>
        <name>5-phospho-alpha-D-ribose 1-diphosphate</name>
        <dbReference type="ChEBI" id="CHEBI:58017"/>
    </ligand>
</feature>
<feature type="binding site" evidence="1">
    <location>
        <position position="109"/>
    </location>
    <ligand>
        <name>anthranilate</name>
        <dbReference type="ChEBI" id="CHEBI:16567"/>
        <label>1</label>
    </ligand>
</feature>
<feature type="binding site" evidence="1">
    <location>
        <position position="118"/>
    </location>
    <ligand>
        <name>5-phospho-alpha-D-ribose 1-diphosphate</name>
        <dbReference type="ChEBI" id="CHEBI:58017"/>
    </ligand>
</feature>
<feature type="binding site" evidence="1">
    <location>
        <position position="164"/>
    </location>
    <ligand>
        <name>anthranilate</name>
        <dbReference type="ChEBI" id="CHEBI:16567"/>
        <label>2</label>
    </ligand>
</feature>
<feature type="binding site" evidence="1">
    <location>
        <position position="223"/>
    </location>
    <ligand>
        <name>Mg(2+)</name>
        <dbReference type="ChEBI" id="CHEBI:18420"/>
        <label>2</label>
    </ligand>
</feature>
<feature type="binding site" evidence="1">
    <location>
        <position position="224"/>
    </location>
    <ligand>
        <name>Mg(2+)</name>
        <dbReference type="ChEBI" id="CHEBI:18420"/>
        <label>1</label>
    </ligand>
</feature>
<feature type="binding site" evidence="1">
    <location>
        <position position="224"/>
    </location>
    <ligand>
        <name>Mg(2+)</name>
        <dbReference type="ChEBI" id="CHEBI:18420"/>
        <label>2</label>
    </ligand>
</feature>
<organism>
    <name type="scientific">Bacillus pumilus (strain SAFR-032)</name>
    <dbReference type="NCBI Taxonomy" id="315750"/>
    <lineage>
        <taxon>Bacteria</taxon>
        <taxon>Bacillati</taxon>
        <taxon>Bacillota</taxon>
        <taxon>Bacilli</taxon>
        <taxon>Bacillales</taxon>
        <taxon>Bacillaceae</taxon>
        <taxon>Bacillus</taxon>
    </lineage>
</organism>
<dbReference type="EC" id="2.4.2.18" evidence="1"/>
<dbReference type="EMBL" id="CP000813">
    <property type="protein sequence ID" value="ABV62668.1"/>
    <property type="molecule type" value="Genomic_DNA"/>
</dbReference>
<dbReference type="RefSeq" id="WP_012010379.1">
    <property type="nucleotide sequence ID" value="NZ_VEIC01000012.1"/>
</dbReference>
<dbReference type="SMR" id="A8FEK1"/>
<dbReference type="STRING" id="315750.BPUM_1998"/>
<dbReference type="GeneID" id="5621264"/>
<dbReference type="KEGG" id="bpu:BPUM_1998"/>
<dbReference type="eggNOG" id="COG0547">
    <property type="taxonomic scope" value="Bacteria"/>
</dbReference>
<dbReference type="HOGENOM" id="CLU_034315_2_1_9"/>
<dbReference type="OrthoDB" id="9806430at2"/>
<dbReference type="UniPathway" id="UPA00035">
    <property type="reaction ID" value="UER00041"/>
</dbReference>
<dbReference type="Proteomes" id="UP000001355">
    <property type="component" value="Chromosome"/>
</dbReference>
<dbReference type="GO" id="GO:0005829">
    <property type="term" value="C:cytosol"/>
    <property type="evidence" value="ECO:0007669"/>
    <property type="project" value="TreeGrafter"/>
</dbReference>
<dbReference type="GO" id="GO:0004048">
    <property type="term" value="F:anthranilate phosphoribosyltransferase activity"/>
    <property type="evidence" value="ECO:0007669"/>
    <property type="project" value="UniProtKB-UniRule"/>
</dbReference>
<dbReference type="GO" id="GO:0000287">
    <property type="term" value="F:magnesium ion binding"/>
    <property type="evidence" value="ECO:0007669"/>
    <property type="project" value="UniProtKB-UniRule"/>
</dbReference>
<dbReference type="GO" id="GO:0000162">
    <property type="term" value="P:L-tryptophan biosynthetic process"/>
    <property type="evidence" value="ECO:0007669"/>
    <property type="project" value="UniProtKB-UniRule"/>
</dbReference>
<dbReference type="FunFam" id="3.40.1030.10:FF:000002">
    <property type="entry name" value="Anthranilate phosphoribosyltransferase"/>
    <property type="match status" value="1"/>
</dbReference>
<dbReference type="Gene3D" id="3.40.1030.10">
    <property type="entry name" value="Nucleoside phosphorylase/phosphoribosyltransferase catalytic domain"/>
    <property type="match status" value="1"/>
</dbReference>
<dbReference type="Gene3D" id="1.20.970.10">
    <property type="entry name" value="Transferase, Pyrimidine Nucleoside Phosphorylase, Chain C"/>
    <property type="match status" value="1"/>
</dbReference>
<dbReference type="HAMAP" id="MF_00211">
    <property type="entry name" value="TrpD"/>
    <property type="match status" value="1"/>
</dbReference>
<dbReference type="InterPro" id="IPR005940">
    <property type="entry name" value="Anthranilate_Pribosyl_Tfrase"/>
</dbReference>
<dbReference type="InterPro" id="IPR000312">
    <property type="entry name" value="Glycosyl_Trfase_fam3"/>
</dbReference>
<dbReference type="InterPro" id="IPR017459">
    <property type="entry name" value="Glycosyl_Trfase_fam3_N_dom"/>
</dbReference>
<dbReference type="InterPro" id="IPR036320">
    <property type="entry name" value="Glycosyl_Trfase_fam3_N_dom_sf"/>
</dbReference>
<dbReference type="InterPro" id="IPR035902">
    <property type="entry name" value="Nuc_phospho_transferase"/>
</dbReference>
<dbReference type="NCBIfam" id="TIGR01245">
    <property type="entry name" value="trpD"/>
    <property type="match status" value="1"/>
</dbReference>
<dbReference type="PANTHER" id="PTHR43285">
    <property type="entry name" value="ANTHRANILATE PHOSPHORIBOSYLTRANSFERASE"/>
    <property type="match status" value="1"/>
</dbReference>
<dbReference type="PANTHER" id="PTHR43285:SF2">
    <property type="entry name" value="ANTHRANILATE PHOSPHORIBOSYLTRANSFERASE"/>
    <property type="match status" value="1"/>
</dbReference>
<dbReference type="Pfam" id="PF02885">
    <property type="entry name" value="Glycos_trans_3N"/>
    <property type="match status" value="1"/>
</dbReference>
<dbReference type="Pfam" id="PF00591">
    <property type="entry name" value="Glycos_transf_3"/>
    <property type="match status" value="1"/>
</dbReference>
<dbReference type="SUPFAM" id="SSF52418">
    <property type="entry name" value="Nucleoside phosphorylase/phosphoribosyltransferase catalytic domain"/>
    <property type="match status" value="1"/>
</dbReference>
<dbReference type="SUPFAM" id="SSF47648">
    <property type="entry name" value="Nucleoside phosphorylase/phosphoribosyltransferase N-terminal domain"/>
    <property type="match status" value="1"/>
</dbReference>
<reference key="1">
    <citation type="journal article" date="2007" name="PLoS ONE">
        <title>Paradoxical DNA repair and peroxide resistance gene conservation in Bacillus pumilus SAFR-032.</title>
        <authorList>
            <person name="Gioia J."/>
            <person name="Yerrapragada S."/>
            <person name="Qin X."/>
            <person name="Jiang H."/>
            <person name="Igboeli O.C."/>
            <person name="Muzny D."/>
            <person name="Dugan-Rocha S."/>
            <person name="Ding Y."/>
            <person name="Hawes A."/>
            <person name="Liu W."/>
            <person name="Perez L."/>
            <person name="Kovar C."/>
            <person name="Dinh H."/>
            <person name="Lee S."/>
            <person name="Nazareth L."/>
            <person name="Blyth P."/>
            <person name="Holder M."/>
            <person name="Buhay C."/>
            <person name="Tirumalai M.R."/>
            <person name="Liu Y."/>
            <person name="Dasgupta I."/>
            <person name="Bokhetache L."/>
            <person name="Fujita M."/>
            <person name="Karouia F."/>
            <person name="Eswara Moorthy P."/>
            <person name="Siefert J."/>
            <person name="Uzman A."/>
            <person name="Buzumbo P."/>
            <person name="Verma A."/>
            <person name="Zwiya H."/>
            <person name="McWilliams B.D."/>
            <person name="Olowu A."/>
            <person name="Clinkenbeard K.D."/>
            <person name="Newcombe D."/>
            <person name="Golebiewski L."/>
            <person name="Petrosino J.F."/>
            <person name="Nicholson W.L."/>
            <person name="Fox G.E."/>
            <person name="Venkateswaran K."/>
            <person name="Highlander S.K."/>
            <person name="Weinstock G.M."/>
        </authorList>
    </citation>
    <scope>NUCLEOTIDE SEQUENCE [LARGE SCALE GENOMIC DNA]</scope>
    <source>
        <strain>SAFR-032</strain>
    </source>
</reference>
<sequence length="340" mass="36575">MNQRLSALVNGGFLSENEAHQLMHDMMSGSLTDAEVAASLSILAHRGETAEEMTGFVRAMRQKAEPAERSLDVVDTCGTGGDGLSTFNISTAAAIVASAAGAKIAKHGNRSVSSKSGSADVLECLGIHIQSTPEETRRQIQEKNMGFLFAPMYHSSMKQVAAVRKQLGFRTVFNLLGPLCHPMQAKKQIIGVYAKEKAKLMAEALAPLEPEHVLFVCGEDGLDELTITANSYVIELKKGDMTEYTLNPEDFGLAKGYLSDIQVQSPEESAKLIQNILNHQTEGAPLHITALNAGAALYVAGKSESLMAGTLKALETIKNGAAKEQLARLKQKTKEEEIYA</sequence>
<accession>A8FEK1</accession>
<name>TRPD_BACP2</name>
<keyword id="KW-0028">Amino-acid biosynthesis</keyword>
<keyword id="KW-0057">Aromatic amino acid biosynthesis</keyword>
<keyword id="KW-0328">Glycosyltransferase</keyword>
<keyword id="KW-0460">Magnesium</keyword>
<keyword id="KW-0479">Metal-binding</keyword>
<keyword id="KW-0808">Transferase</keyword>
<keyword id="KW-0822">Tryptophan biosynthesis</keyword>
<protein>
    <recommendedName>
        <fullName evidence="1">Anthranilate phosphoribosyltransferase</fullName>
        <ecNumber evidence="1">2.4.2.18</ecNumber>
    </recommendedName>
</protein>
<gene>
    <name evidence="1" type="primary">trpD</name>
    <name type="ordered locus">BPUM_1998</name>
</gene>
<comment type="function">
    <text evidence="1">Catalyzes the transfer of the phosphoribosyl group of 5-phosphorylribose-1-pyrophosphate (PRPP) to anthranilate to yield N-(5'-phosphoribosyl)-anthranilate (PRA).</text>
</comment>
<comment type="catalytic activity">
    <reaction evidence="1">
        <text>N-(5-phospho-beta-D-ribosyl)anthranilate + diphosphate = 5-phospho-alpha-D-ribose 1-diphosphate + anthranilate</text>
        <dbReference type="Rhea" id="RHEA:11768"/>
        <dbReference type="ChEBI" id="CHEBI:16567"/>
        <dbReference type="ChEBI" id="CHEBI:18277"/>
        <dbReference type="ChEBI" id="CHEBI:33019"/>
        <dbReference type="ChEBI" id="CHEBI:58017"/>
        <dbReference type="EC" id="2.4.2.18"/>
    </reaction>
</comment>
<comment type="cofactor">
    <cofactor evidence="1">
        <name>Mg(2+)</name>
        <dbReference type="ChEBI" id="CHEBI:18420"/>
    </cofactor>
    <text evidence="1">Binds 2 magnesium ions per monomer.</text>
</comment>
<comment type="pathway">
    <text evidence="1">Amino-acid biosynthesis; L-tryptophan biosynthesis; L-tryptophan from chorismate: step 2/5.</text>
</comment>
<comment type="subunit">
    <text evidence="1">Homodimer.</text>
</comment>
<comment type="similarity">
    <text evidence="1">Belongs to the anthranilate phosphoribosyltransferase family.</text>
</comment>
<proteinExistence type="inferred from homology"/>